<feature type="chain" id="PRO_1000005593" description="Large ribosomal subunit protein uL10">
    <location>
        <begin position="1"/>
        <end position="166"/>
    </location>
</feature>
<comment type="function">
    <text evidence="1">Forms part of the ribosomal stalk, playing a central role in the interaction of the ribosome with GTP-bound translation factors.</text>
</comment>
<comment type="subunit">
    <text evidence="1">Part of the ribosomal stalk of the 50S ribosomal subunit. The N-terminus interacts with L11 and the large rRNA to form the base of the stalk. The C-terminus forms an elongated spine to which L12 dimers bind in a sequential fashion forming a multimeric L10(L12)X complex.</text>
</comment>
<comment type="similarity">
    <text evidence="1">Belongs to the universal ribosomal protein uL10 family.</text>
</comment>
<protein>
    <recommendedName>
        <fullName evidence="1">Large ribosomal subunit protein uL10</fullName>
    </recommendedName>
    <alternativeName>
        <fullName evidence="2">50S ribosomal protein L10</fullName>
    </alternativeName>
</protein>
<sequence>MALRLEDKKAIVAEVNEAAKGALSAVAADSRGVTVGAMTGLRKKAREAGVYVRVVRNTLARRAVEGTAFECLAETFTGPTLIAFSLEHPGAAARLLKDFAKEQANFEVKGAAFEGNFIPAAEIDRLAKLPTYEEALAQLMMTMKEASAGKFVRTLAALRDQKQEAA</sequence>
<gene>
    <name evidence="1" type="primary">rplJ</name>
    <name type="ordered locus">Sputcn32_3768</name>
</gene>
<accession>A4YBZ2</accession>
<dbReference type="EMBL" id="CP000681">
    <property type="protein sequence ID" value="ABP77475.1"/>
    <property type="molecule type" value="Genomic_DNA"/>
</dbReference>
<dbReference type="STRING" id="319224.Sputcn32_3768"/>
<dbReference type="KEGG" id="spc:Sputcn32_3768"/>
<dbReference type="eggNOG" id="COG0244">
    <property type="taxonomic scope" value="Bacteria"/>
</dbReference>
<dbReference type="HOGENOM" id="CLU_092227_0_2_6"/>
<dbReference type="GO" id="GO:0015934">
    <property type="term" value="C:large ribosomal subunit"/>
    <property type="evidence" value="ECO:0007669"/>
    <property type="project" value="InterPro"/>
</dbReference>
<dbReference type="GO" id="GO:0070180">
    <property type="term" value="F:large ribosomal subunit rRNA binding"/>
    <property type="evidence" value="ECO:0007669"/>
    <property type="project" value="UniProtKB-UniRule"/>
</dbReference>
<dbReference type="GO" id="GO:0003735">
    <property type="term" value="F:structural constituent of ribosome"/>
    <property type="evidence" value="ECO:0007669"/>
    <property type="project" value="InterPro"/>
</dbReference>
<dbReference type="GO" id="GO:0006412">
    <property type="term" value="P:translation"/>
    <property type="evidence" value="ECO:0007669"/>
    <property type="project" value="UniProtKB-UniRule"/>
</dbReference>
<dbReference type="CDD" id="cd05797">
    <property type="entry name" value="Ribosomal_L10"/>
    <property type="match status" value="1"/>
</dbReference>
<dbReference type="FunFam" id="3.30.70.1730:FF:000001">
    <property type="entry name" value="50S ribosomal protein L10"/>
    <property type="match status" value="1"/>
</dbReference>
<dbReference type="Gene3D" id="3.30.70.1730">
    <property type="match status" value="1"/>
</dbReference>
<dbReference type="Gene3D" id="6.10.250.2350">
    <property type="match status" value="1"/>
</dbReference>
<dbReference type="HAMAP" id="MF_00362">
    <property type="entry name" value="Ribosomal_uL10"/>
    <property type="match status" value="1"/>
</dbReference>
<dbReference type="InterPro" id="IPR001790">
    <property type="entry name" value="Ribosomal_uL10"/>
</dbReference>
<dbReference type="InterPro" id="IPR043141">
    <property type="entry name" value="Ribosomal_uL10-like_sf"/>
</dbReference>
<dbReference type="InterPro" id="IPR022973">
    <property type="entry name" value="Ribosomal_uL10_bac"/>
</dbReference>
<dbReference type="InterPro" id="IPR047865">
    <property type="entry name" value="Ribosomal_uL10_bac_type"/>
</dbReference>
<dbReference type="InterPro" id="IPR002363">
    <property type="entry name" value="Ribosomal_uL10_CS_bac"/>
</dbReference>
<dbReference type="NCBIfam" id="NF000955">
    <property type="entry name" value="PRK00099.1-1"/>
    <property type="match status" value="1"/>
</dbReference>
<dbReference type="PANTHER" id="PTHR11560">
    <property type="entry name" value="39S RIBOSOMAL PROTEIN L10, MITOCHONDRIAL"/>
    <property type="match status" value="1"/>
</dbReference>
<dbReference type="Pfam" id="PF00466">
    <property type="entry name" value="Ribosomal_L10"/>
    <property type="match status" value="1"/>
</dbReference>
<dbReference type="SUPFAM" id="SSF160369">
    <property type="entry name" value="Ribosomal protein L10-like"/>
    <property type="match status" value="1"/>
</dbReference>
<dbReference type="PROSITE" id="PS01109">
    <property type="entry name" value="RIBOSOMAL_L10"/>
    <property type="match status" value="1"/>
</dbReference>
<proteinExistence type="inferred from homology"/>
<name>RL10_SHEPC</name>
<evidence type="ECO:0000255" key="1">
    <source>
        <dbReference type="HAMAP-Rule" id="MF_00362"/>
    </source>
</evidence>
<evidence type="ECO:0000305" key="2"/>
<organism>
    <name type="scientific">Shewanella putrefaciens (strain CN-32 / ATCC BAA-453)</name>
    <dbReference type="NCBI Taxonomy" id="319224"/>
    <lineage>
        <taxon>Bacteria</taxon>
        <taxon>Pseudomonadati</taxon>
        <taxon>Pseudomonadota</taxon>
        <taxon>Gammaproteobacteria</taxon>
        <taxon>Alteromonadales</taxon>
        <taxon>Shewanellaceae</taxon>
        <taxon>Shewanella</taxon>
    </lineage>
</organism>
<keyword id="KW-0687">Ribonucleoprotein</keyword>
<keyword id="KW-0689">Ribosomal protein</keyword>
<keyword id="KW-0694">RNA-binding</keyword>
<keyword id="KW-0699">rRNA-binding</keyword>
<reference key="1">
    <citation type="submission" date="2007-04" db="EMBL/GenBank/DDBJ databases">
        <title>Complete sequence of Shewanella putrefaciens CN-32.</title>
        <authorList>
            <consortium name="US DOE Joint Genome Institute"/>
            <person name="Copeland A."/>
            <person name="Lucas S."/>
            <person name="Lapidus A."/>
            <person name="Barry K."/>
            <person name="Detter J.C."/>
            <person name="Glavina del Rio T."/>
            <person name="Hammon N."/>
            <person name="Israni S."/>
            <person name="Dalin E."/>
            <person name="Tice H."/>
            <person name="Pitluck S."/>
            <person name="Chain P."/>
            <person name="Malfatti S."/>
            <person name="Shin M."/>
            <person name="Vergez L."/>
            <person name="Schmutz J."/>
            <person name="Larimer F."/>
            <person name="Land M."/>
            <person name="Hauser L."/>
            <person name="Kyrpides N."/>
            <person name="Mikhailova N."/>
            <person name="Romine M.F."/>
            <person name="Fredrickson J."/>
            <person name="Tiedje J."/>
            <person name="Richardson P."/>
        </authorList>
    </citation>
    <scope>NUCLEOTIDE SEQUENCE [LARGE SCALE GENOMIC DNA]</scope>
    <source>
        <strain>CN-32 / ATCC BAA-453</strain>
    </source>
</reference>